<name>GVPA_HALMT</name>
<organism>
    <name type="scientific">Haloferax mediterranei (strain ATCC 33500 / DSM 1411 / JCM 8866 / NBRC 14739 / NCIMB 2177 / R-4)</name>
    <name type="common">Halobacterium mediterranei</name>
    <dbReference type="NCBI Taxonomy" id="523841"/>
    <lineage>
        <taxon>Archaea</taxon>
        <taxon>Methanobacteriati</taxon>
        <taxon>Methanobacteriota</taxon>
        <taxon>Stenosarchaea group</taxon>
        <taxon>Halobacteria</taxon>
        <taxon>Halobacteriales</taxon>
        <taxon>Haloferacaceae</taxon>
        <taxon>Haloferax</taxon>
    </lineage>
</organism>
<keyword id="KW-0903">Direct protein sequencing</keyword>
<keyword id="KW-0304">Gas vesicle</keyword>
<accession>P23761</accession>
<accession>I3R592</accession>
<sequence length="78" mass="8275">MVQPDSSSLAEVLDRVLDKGVVVDVWARISLVGIEILTVEARVVAASVDTFLHYAEEIAKIEQAELTAGAEAAPTPEA</sequence>
<evidence type="ECO:0000255" key="1">
    <source>
        <dbReference type="HAMAP-Rule" id="MF_00576"/>
    </source>
</evidence>
<evidence type="ECO:0000269" key="2">
    <source>
    </source>
</evidence>
<evidence type="ECO:0000269" key="3">
    <source>
    </source>
</evidence>
<evidence type="ECO:0000269" key="4">
    <source>
    </source>
</evidence>
<evidence type="ECO:0000269" key="5">
    <source>
    </source>
</evidence>
<evidence type="ECO:0000269" key="6">
    <source>
    </source>
</evidence>
<evidence type="ECO:0000269" key="7">
    <source>
    </source>
</evidence>
<evidence type="ECO:0000269" key="8">
    <source>
    </source>
</evidence>
<evidence type="ECO:0000269" key="9">
    <source>
    </source>
</evidence>
<evidence type="ECO:0000303" key="10">
    <source>
    </source>
</evidence>
<evidence type="ECO:0000303" key="11">
    <source>
    </source>
</evidence>
<evidence type="ECO:0000305" key="12">
    <source>
    </source>
</evidence>
<evidence type="ECO:0000305" key="13">
    <source>
    </source>
</evidence>
<evidence type="ECO:0000305" key="14">
    <source>
    </source>
</evidence>
<comment type="function">
    <text evidence="2 3 6 7">Gas vesicles are hollow, gas filled proteinaceous nanostructures found in some microorganisms. During planktonic growth they allow positioning of the organism at a favorable depth for light or nutrient acquisition. GvpA forms the protein shell (PubMed:1282192, PubMed:1703266, PubMed:21542854). This gene replaces p-gvpA of H.salinarum very poorly, only about 1% of GVs are formed; the few gas vesicles formed are quite strong with a very high critical collapse pressure (CCP) of 0.213 MPa (PubMed:12167531).</text>
</comment>
<comment type="function">
    <text evidence="3 5 9">Expression of a 9.5 kb mc-vac DNA fragment containing 2 divergently transcribed regions (gvpD-gvpE-gvpF-gvpG-gvpH-gvpI-gvpJ-gvpK-gvpL-gvpM and gvpA-gvpC-gvpN-gvpO) allows H.volcanii to produce gas vesicles.</text>
</comment>
<comment type="subunit">
    <text evidence="1 13">The gas vesicle shell is 2 nm thick and consists of a single layer of this protein. It forms helical ribs nearly perpendicular to the long axis of the vesicle (By similarity). Modeled as antiparallel homodimers (PubMed:21542854).</text>
</comment>
<comment type="subcellular location">
    <subcellularLocation>
        <location evidence="1 3 6 8">Gas vesicle shell</location>
    </subcellularLocation>
    <text evidence="6">Mature gas vesicles are cylindrical with conical ends, maximally 1.5 um long with ribs about 5 nm wide, parallel to the long axis.</text>
</comment>
<comment type="induction">
    <text evidence="3 4 6 8 9 12 14">Transcription is controlled by the GvpD-GvpE pair (Probable) (PubMed:12864859, PubMed:8757736). Transcripts are maximal at the beginning of stationary phase. Gas vesicle formation is maximally induced in stationary phase when grown in 20-25% total salt (NaCl, MgSO(4), KCl) (at protein level) (PubMed:1282192, PubMed:1703266, PubMed:8757736). Expressed from a single promoter upstream of gvpA; most transcripts stop at the gvpA terminator, with low read-through into downstream gvpC-gvpN-gvpO. Expression starts in early stationary phase and is maximal in stationary phase (PubMed:12864859, PubMed:7683649, PubMed:8757736). Highly expressed in 25% salt, poorly expressed in 15% salt, no gas vesicles are formed at 15% salt (PubMed:8757736).</text>
</comment>
<comment type="domain">
    <text evidence="13">Infrared spectra studies suggest the major structural elements are 47% alpha-helix and 25% antiparallel beta-strands; it is thought the beta-strands make the hydrophobic interior surface (PubMed:21542854).</text>
</comment>
<comment type="miscellaneous">
    <text evidence="3 5 9">Encoded in a 14-gene locus called mc-vac.</text>
</comment>
<comment type="similarity">
    <text evidence="1">Belongs to the gas vesicle GvpA family.</text>
</comment>
<protein>
    <recommendedName>
        <fullName evidence="1">Gas vesicle protein A</fullName>
        <shortName evidence="1">GvpA</shortName>
    </recommendedName>
    <alternativeName>
        <fullName evidence="10">Vac</fullName>
    </alternativeName>
</protein>
<gene>
    <name evidence="1 10" type="primary">gvpA</name>
    <name evidence="11" type="synonym">mc-vac</name>
    <name type="ordered locus">HFX_1696</name>
</gene>
<reference key="1">
    <citation type="journal article" date="1992" name="J. Mol. Biol.">
        <title>Three different but related gene clusters encoding gas vesicles in halophilic archaea.</title>
        <authorList>
            <person name="Englert C."/>
            <person name="Krueger K."/>
            <person name="Offner S."/>
            <person name="Pfeifer F."/>
        </authorList>
    </citation>
    <scope>NUCLEOTIDE SEQUENCE [GENOMIC DNA]</scope>
    <scope>GAS VESICLE GENE CLUSTER</scope>
    <source>
        <strain>ATCC 33500 / DSM 1411 / JCM 8866 / NBRC 14739 / NCIMB 2177 / R-4</strain>
    </source>
</reference>
<reference key="2">
    <citation type="journal article" date="1990" name="Mol. Gen. Genet.">
        <title>Expression of the major gas vesicle protein gene in the halophilic archaebacterium Haloferax mediterranei is modulated by salt.</title>
        <authorList>
            <person name="Englert C."/>
            <person name="Horne M."/>
            <person name="Pfeifer F."/>
        </authorList>
    </citation>
    <scope>NUCLEOTIDE SEQUENCE [GENOMIC DNA]</scope>
    <scope>PROTEIN SEQUENCE OF 2-6</scope>
    <scope>SUBCELLULAR LOCATION</scope>
    <scope>INDUCTION</scope>
    <source>
        <strain>ATCC 33500 / DSM 1411 / JCM 8866 / NBRC 14739 / NCIMB 2177 / R-4</strain>
    </source>
</reference>
<reference key="3">
    <citation type="journal article" date="2012" name="J. Bacteriol.">
        <title>Complete genome sequence of the metabolically versatile halophilic archaeon Haloferax mediterranei, a poly(3-hydroxybutyrate-co-3-hydroxyvalerate) producer.</title>
        <authorList>
            <person name="Han J."/>
            <person name="Zhang F."/>
            <person name="Hou J."/>
            <person name="Liu X."/>
            <person name="Li M."/>
            <person name="Liu H."/>
            <person name="Cai L."/>
            <person name="Zhang B."/>
            <person name="Chen Y."/>
            <person name="Zhou J."/>
            <person name="Hu S."/>
            <person name="Xiang H."/>
        </authorList>
    </citation>
    <scope>NUCLEOTIDE SEQUENCE [LARGE SCALE GENOMIC DNA]</scope>
    <source>
        <strain>ATCC 33500 / DSM 1411 / JCM 8866 / NBRC 14739 / NCIMB 2177 / R-4</strain>
    </source>
</reference>
<reference key="4">
    <citation type="journal article" date="1993" name="J. Biol. Chem.">
        <title>Analysis of gas vesicle gene expression in Haloferax mediterranei reveals that GvpA and GvpC are both gas vesicle structural proteins.</title>
        <authorList>
            <person name="Englert C."/>
            <person name="Pfeifer F."/>
        </authorList>
    </citation>
    <scope>SUBCELLULAR LOCATION</scope>
    <scope>INDUCTION</scope>
</reference>
<reference key="5">
    <citation type="journal article" date="1992" name="Mol. Microbiol.">
        <title>Functional analysis of the gas vesicle gene cluster of the halophilic archaeon Haloferax mediterranei defines the vac-region boundary and suggests a regulatory role for the gvpD gene or its product.</title>
        <authorList>
            <person name="Englert C."/>
            <person name="Wanner G."/>
            <person name="Pfeifer F."/>
        </authorList>
    </citation>
    <scope>SUBCELLULAR LOCATION</scope>
    <scope>INDUCTION</scope>
</reference>
<reference key="6">
    <citation type="journal article" date="1996" name="Microbiology">
        <title>Influence of salt on the transcription of the gas-vesicle genes of Haloferax mediterranei and identification of the endogenous transcriptional activator gene.</title>
        <authorList>
            <person name="Roeder R."/>
            <person name="Pfeifer F."/>
        </authorList>
    </citation>
    <scope>INDUCTION BY SALT</scope>
    <source>
        <strain>ATCC 33500 / DSM 1411 / JCM 8866 / NBRC 14739 / NCIMB 2177 / R-4</strain>
    </source>
</reference>
<reference key="7">
    <citation type="journal article" date="2002" name="FEMS Microbiol. Lett.">
        <title>The sequence of the major gas vesicle protein, GvpA, influences the width and strength of halobacterial gas vesicles.</title>
        <authorList>
            <person name="Beard S.J."/>
            <person name="Hayes P.K."/>
            <person name="Pfeifer F."/>
            <person name="Walsby A.E."/>
        </authorList>
    </citation>
    <scope>SPECIES SPECIFICITY</scope>
    <source>
        <strain>ATCC 33500 / DSM 1411 / JCM 8866 / NBRC 14739 / NCIMB 2177 / R-4</strain>
    </source>
</reference>
<reference key="8">
    <citation type="journal article" date="2003" name="Mol. Microbiol.">
        <title>Regulation of the expression of gas vesicle genes in Haloferax mediterranei: interaction of the two regulatory proteins GvpD and GvpE.</title>
        <authorList>
            <person name="Zimmermann P."/>
            <person name="Pfeifer F."/>
        </authorList>
    </citation>
    <scope>INDUCTION</scope>
</reference>
<reference key="9">
    <citation type="journal article" date="2011" name="Mol. Microbiol.">
        <title>Structural model of the gas vesicle protein GvpA and analysis of GvpA mutants in vivo.</title>
        <authorList>
            <person name="Strunk T."/>
            <person name="Hamacher K."/>
            <person name="Hoffgaard F."/>
            <person name="Engelhardt H."/>
            <person name="Zillig M.D."/>
            <person name="Faist K."/>
            <person name="Wenzel W."/>
            <person name="Pfeifer F."/>
        </authorList>
    </citation>
    <scope>FUNCTION</scope>
    <scope>POSSIBLE SUBUNIT</scope>
    <scope>DOMAIN</scope>
    <scope>STRUCTURAL MODEL</scope>
</reference>
<proteinExistence type="evidence at protein level"/>
<dbReference type="EMBL" id="X64701">
    <property type="protein sequence ID" value="CAA45945.1"/>
    <property type="molecule type" value="Genomic_DNA"/>
</dbReference>
<dbReference type="EMBL" id="X56027">
    <property type="protein sequence ID" value="CAA39503.1"/>
    <property type="molecule type" value="Genomic_DNA"/>
</dbReference>
<dbReference type="EMBL" id="CP001868">
    <property type="protein sequence ID" value="AFK19402.1"/>
    <property type="molecule type" value="Genomic_DNA"/>
</dbReference>
<dbReference type="PIR" id="S11923">
    <property type="entry name" value="S11923"/>
</dbReference>
<dbReference type="RefSeq" id="WP_004056706.1">
    <property type="nucleotide sequence ID" value="NC_017941.2"/>
</dbReference>
<dbReference type="SMR" id="P23761"/>
<dbReference type="STRING" id="523841.HFX_1696"/>
<dbReference type="PaxDb" id="523841-HFX_1696"/>
<dbReference type="GeneID" id="40157051"/>
<dbReference type="KEGG" id="hme:HFX_1696"/>
<dbReference type="eggNOG" id="arCOG03092">
    <property type="taxonomic scope" value="Archaea"/>
</dbReference>
<dbReference type="HOGENOM" id="CLU_169045_1_0_2"/>
<dbReference type="OrthoDB" id="187177at2157"/>
<dbReference type="Proteomes" id="UP000006469">
    <property type="component" value="Chromosome"/>
</dbReference>
<dbReference type="GO" id="GO:0033172">
    <property type="term" value="C:gas vesicle shell"/>
    <property type="evidence" value="ECO:0007669"/>
    <property type="project" value="UniProtKB-UniRule"/>
</dbReference>
<dbReference type="GO" id="GO:0012506">
    <property type="term" value="C:vesicle membrane"/>
    <property type="evidence" value="ECO:0007669"/>
    <property type="project" value="InterPro"/>
</dbReference>
<dbReference type="GO" id="GO:0005198">
    <property type="term" value="F:structural molecule activity"/>
    <property type="evidence" value="ECO:0007669"/>
    <property type="project" value="InterPro"/>
</dbReference>
<dbReference type="HAMAP" id="MF_00576">
    <property type="entry name" value="Gas_vesicle_A"/>
    <property type="match status" value="1"/>
</dbReference>
<dbReference type="InterPro" id="IPR000638">
    <property type="entry name" value="Gas-vesicle_GvpA-like"/>
</dbReference>
<dbReference type="InterPro" id="IPR047870">
    <property type="entry name" value="Gas_vesicle_GvpA"/>
</dbReference>
<dbReference type="InterPro" id="IPR050530">
    <property type="entry name" value="GvpA"/>
</dbReference>
<dbReference type="InterPro" id="IPR018493">
    <property type="entry name" value="GvpA-like_CS"/>
</dbReference>
<dbReference type="NCBIfam" id="NF046092">
    <property type="entry name" value="halo_gas_GvpA"/>
    <property type="match status" value="1"/>
</dbReference>
<dbReference type="NCBIfam" id="NF006874">
    <property type="entry name" value="PRK09371.1"/>
    <property type="match status" value="1"/>
</dbReference>
<dbReference type="PANTHER" id="PTHR35344:SF4">
    <property type="entry name" value="GAS VESICLE PROTEIN A1"/>
    <property type="match status" value="1"/>
</dbReference>
<dbReference type="PANTHER" id="PTHR35344">
    <property type="entry name" value="GAS VESICLE STRUCTURAL PROTEIN 2-RELATED"/>
    <property type="match status" value="1"/>
</dbReference>
<dbReference type="Pfam" id="PF00741">
    <property type="entry name" value="Gas_vesicle"/>
    <property type="match status" value="1"/>
</dbReference>
<dbReference type="PROSITE" id="PS00234">
    <property type="entry name" value="GAS_VESICLE_A_1"/>
    <property type="match status" value="1"/>
</dbReference>
<dbReference type="PROSITE" id="PS00669">
    <property type="entry name" value="GAS_VESICLE_A_2"/>
    <property type="match status" value="1"/>
</dbReference>
<feature type="initiator methionine" description="Removed" evidence="6">
    <location>
        <position position="1"/>
    </location>
</feature>
<feature type="chain" id="PRO_0000199992" description="Gas vesicle protein A">
    <location>
        <begin position="2"/>
        <end position="78"/>
    </location>
</feature>
<feature type="region of interest" description="Alpha helix 1" evidence="13">
    <location>
        <begin position="9"/>
        <end position="19"/>
    </location>
</feature>
<feature type="region of interest" description="Beta-strand 1" evidence="13">
    <location>
        <begin position="23"/>
        <end position="31"/>
    </location>
</feature>
<feature type="region of interest" description="Beta turn" evidence="13">
    <location>
        <begin position="32"/>
        <end position="34"/>
    </location>
</feature>
<feature type="region of interest" description="Beta-strand 2" evidence="13">
    <location>
        <begin position="35"/>
        <end position="43"/>
    </location>
</feature>
<feature type="region of interest" description="Alpha helix 2" evidence="13">
    <location>
        <begin position="48"/>
        <end position="67"/>
    </location>
</feature>